<accession>P60733</accession>
<accession>Q9JQQ7</accession>
<feature type="chain" id="PRO_0000130686" description="Large ribosomal subunit protein uL24">
    <location>
        <begin position="1"/>
        <end position="107"/>
    </location>
</feature>
<reference key="1">
    <citation type="journal article" date="2000" name="Science">
        <title>Complete genome sequence of Neisseria meningitidis serogroup B strain MC58.</title>
        <authorList>
            <person name="Tettelin H."/>
            <person name="Saunders N.J."/>
            <person name="Heidelberg J.F."/>
            <person name="Jeffries A.C."/>
            <person name="Nelson K.E."/>
            <person name="Eisen J.A."/>
            <person name="Ketchum K.A."/>
            <person name="Hood D.W."/>
            <person name="Peden J.F."/>
            <person name="Dodson R.J."/>
            <person name="Nelson W.C."/>
            <person name="Gwinn M.L."/>
            <person name="DeBoy R.T."/>
            <person name="Peterson J.D."/>
            <person name="Hickey E.K."/>
            <person name="Haft D.H."/>
            <person name="Salzberg S.L."/>
            <person name="White O."/>
            <person name="Fleischmann R.D."/>
            <person name="Dougherty B.A."/>
            <person name="Mason T.M."/>
            <person name="Ciecko A."/>
            <person name="Parksey D.S."/>
            <person name="Blair E."/>
            <person name="Cittone H."/>
            <person name="Clark E.B."/>
            <person name="Cotton M.D."/>
            <person name="Utterback T.R."/>
            <person name="Khouri H.M."/>
            <person name="Qin H."/>
            <person name="Vamathevan J.J."/>
            <person name="Gill J."/>
            <person name="Scarlato V."/>
            <person name="Masignani V."/>
            <person name="Pizza M."/>
            <person name="Grandi G."/>
            <person name="Sun L."/>
            <person name="Smith H.O."/>
            <person name="Fraser C.M."/>
            <person name="Moxon E.R."/>
            <person name="Rappuoli R."/>
            <person name="Venter J.C."/>
        </authorList>
    </citation>
    <scope>NUCLEOTIDE SEQUENCE [LARGE SCALE GENOMIC DNA]</scope>
    <source>
        <strain>ATCC BAA-335 / MC58</strain>
    </source>
</reference>
<dbReference type="EMBL" id="AE002098">
    <property type="protein sequence ID" value="AAF40611.1"/>
    <property type="molecule type" value="Genomic_DNA"/>
</dbReference>
<dbReference type="PIR" id="C81232">
    <property type="entry name" value="C81232"/>
</dbReference>
<dbReference type="RefSeq" id="NP_273211.1">
    <property type="nucleotide sequence ID" value="NC_003112.2"/>
</dbReference>
<dbReference type="RefSeq" id="WP_002215435.1">
    <property type="nucleotide sequence ID" value="NC_003112.2"/>
</dbReference>
<dbReference type="SMR" id="P60733"/>
<dbReference type="FunCoup" id="P60733">
    <property type="interactions" value="579"/>
</dbReference>
<dbReference type="STRING" id="122586.NMB0153"/>
<dbReference type="PaxDb" id="122586-NMB0153"/>
<dbReference type="GeneID" id="93387228"/>
<dbReference type="KEGG" id="nme:NMB0153"/>
<dbReference type="PATRIC" id="fig|122586.8.peg.194"/>
<dbReference type="HOGENOM" id="CLU_093315_2_2_4"/>
<dbReference type="InParanoid" id="P60733"/>
<dbReference type="OrthoDB" id="9807419at2"/>
<dbReference type="Proteomes" id="UP000000425">
    <property type="component" value="Chromosome"/>
</dbReference>
<dbReference type="GO" id="GO:0022625">
    <property type="term" value="C:cytosolic large ribosomal subunit"/>
    <property type="evidence" value="ECO:0000318"/>
    <property type="project" value="GO_Central"/>
</dbReference>
<dbReference type="GO" id="GO:0019843">
    <property type="term" value="F:rRNA binding"/>
    <property type="evidence" value="ECO:0007669"/>
    <property type="project" value="UniProtKB-UniRule"/>
</dbReference>
<dbReference type="GO" id="GO:0003735">
    <property type="term" value="F:structural constituent of ribosome"/>
    <property type="evidence" value="ECO:0007669"/>
    <property type="project" value="InterPro"/>
</dbReference>
<dbReference type="GO" id="GO:0006412">
    <property type="term" value="P:translation"/>
    <property type="evidence" value="ECO:0000318"/>
    <property type="project" value="GO_Central"/>
</dbReference>
<dbReference type="CDD" id="cd06089">
    <property type="entry name" value="KOW_RPL26"/>
    <property type="match status" value="1"/>
</dbReference>
<dbReference type="FunFam" id="2.30.30.30:FF:000004">
    <property type="entry name" value="50S ribosomal protein L24"/>
    <property type="match status" value="1"/>
</dbReference>
<dbReference type="Gene3D" id="2.30.30.30">
    <property type="match status" value="1"/>
</dbReference>
<dbReference type="HAMAP" id="MF_01326_B">
    <property type="entry name" value="Ribosomal_uL24_B"/>
    <property type="match status" value="1"/>
</dbReference>
<dbReference type="InterPro" id="IPR005824">
    <property type="entry name" value="KOW"/>
</dbReference>
<dbReference type="InterPro" id="IPR014722">
    <property type="entry name" value="Rib_uL2_dom2"/>
</dbReference>
<dbReference type="InterPro" id="IPR003256">
    <property type="entry name" value="Ribosomal_uL24"/>
</dbReference>
<dbReference type="InterPro" id="IPR005825">
    <property type="entry name" value="Ribosomal_uL24_CS"/>
</dbReference>
<dbReference type="InterPro" id="IPR041988">
    <property type="entry name" value="Ribosomal_uL24_KOW"/>
</dbReference>
<dbReference type="InterPro" id="IPR008991">
    <property type="entry name" value="Translation_prot_SH3-like_sf"/>
</dbReference>
<dbReference type="NCBIfam" id="TIGR01079">
    <property type="entry name" value="rplX_bact"/>
    <property type="match status" value="1"/>
</dbReference>
<dbReference type="PANTHER" id="PTHR12903">
    <property type="entry name" value="MITOCHONDRIAL RIBOSOMAL PROTEIN L24"/>
    <property type="match status" value="1"/>
</dbReference>
<dbReference type="Pfam" id="PF00467">
    <property type="entry name" value="KOW"/>
    <property type="match status" value="1"/>
</dbReference>
<dbReference type="Pfam" id="PF17136">
    <property type="entry name" value="ribosomal_L24"/>
    <property type="match status" value="1"/>
</dbReference>
<dbReference type="SMART" id="SM00739">
    <property type="entry name" value="KOW"/>
    <property type="match status" value="1"/>
</dbReference>
<dbReference type="SUPFAM" id="SSF50104">
    <property type="entry name" value="Translation proteins SH3-like domain"/>
    <property type="match status" value="1"/>
</dbReference>
<dbReference type="PROSITE" id="PS01108">
    <property type="entry name" value="RIBOSOMAL_L24"/>
    <property type="match status" value="1"/>
</dbReference>
<sequence length="107" mass="11667">MNKIIKGDRVVVIAGKDKGKQGQVVRVLGDKVVVEGVNVVKRHQKPNPMRGIEGGIITKEMPLDISNIAILNPETNKADRVGIKLIENEGKVKRVRFFKSNGSIIGA</sequence>
<proteinExistence type="inferred from homology"/>
<evidence type="ECO:0000255" key="1">
    <source>
        <dbReference type="HAMAP-Rule" id="MF_01326"/>
    </source>
</evidence>
<evidence type="ECO:0000305" key="2"/>
<name>RL24_NEIMB</name>
<protein>
    <recommendedName>
        <fullName evidence="1">Large ribosomal subunit protein uL24</fullName>
    </recommendedName>
    <alternativeName>
        <fullName evidence="2">50S ribosomal protein L24</fullName>
    </alternativeName>
</protein>
<comment type="function">
    <text evidence="1">One of two assembly initiator proteins, it binds directly to the 5'-end of the 23S rRNA, where it nucleates assembly of the 50S subunit.</text>
</comment>
<comment type="function">
    <text evidence="1">One of the proteins that surrounds the polypeptide exit tunnel on the outside of the subunit.</text>
</comment>
<comment type="subunit">
    <text evidence="1">Part of the 50S ribosomal subunit.</text>
</comment>
<comment type="similarity">
    <text evidence="1">Belongs to the universal ribosomal protein uL24 family.</text>
</comment>
<keyword id="KW-1185">Reference proteome</keyword>
<keyword id="KW-0687">Ribonucleoprotein</keyword>
<keyword id="KW-0689">Ribosomal protein</keyword>
<keyword id="KW-0694">RNA-binding</keyword>
<keyword id="KW-0699">rRNA-binding</keyword>
<gene>
    <name evidence="1" type="primary">rplX</name>
    <name type="ordered locus">NMB0153</name>
</gene>
<organism>
    <name type="scientific">Neisseria meningitidis serogroup B (strain ATCC BAA-335 / MC58)</name>
    <dbReference type="NCBI Taxonomy" id="122586"/>
    <lineage>
        <taxon>Bacteria</taxon>
        <taxon>Pseudomonadati</taxon>
        <taxon>Pseudomonadota</taxon>
        <taxon>Betaproteobacteria</taxon>
        <taxon>Neisseriales</taxon>
        <taxon>Neisseriaceae</taxon>
        <taxon>Neisseria</taxon>
    </lineage>
</organism>